<keyword id="KW-0028">Amino-acid biosynthesis</keyword>
<keyword id="KW-0057">Aromatic amino acid biosynthesis</keyword>
<keyword id="KW-0456">Lyase</keyword>
<keyword id="KW-0663">Pyridoxal phosphate</keyword>
<keyword id="KW-0822">Tryptophan biosynthesis</keyword>
<comment type="function">
    <text evidence="1">The beta subunit is responsible for the synthesis of L-tryptophan from indole and L-serine.</text>
</comment>
<comment type="catalytic activity">
    <reaction evidence="1">
        <text>(1S,2R)-1-C-(indol-3-yl)glycerol 3-phosphate + L-serine = D-glyceraldehyde 3-phosphate + L-tryptophan + H2O</text>
        <dbReference type="Rhea" id="RHEA:10532"/>
        <dbReference type="ChEBI" id="CHEBI:15377"/>
        <dbReference type="ChEBI" id="CHEBI:33384"/>
        <dbReference type="ChEBI" id="CHEBI:57912"/>
        <dbReference type="ChEBI" id="CHEBI:58866"/>
        <dbReference type="ChEBI" id="CHEBI:59776"/>
        <dbReference type="EC" id="4.2.1.20"/>
    </reaction>
</comment>
<comment type="cofactor">
    <cofactor evidence="1">
        <name>pyridoxal 5'-phosphate</name>
        <dbReference type="ChEBI" id="CHEBI:597326"/>
    </cofactor>
</comment>
<comment type="pathway">
    <text evidence="1">Amino-acid biosynthesis; L-tryptophan biosynthesis; L-tryptophan from chorismate: step 5/5.</text>
</comment>
<comment type="subunit">
    <text evidence="1">Tetramer of two alpha and two beta chains.</text>
</comment>
<comment type="similarity">
    <text evidence="1">Belongs to the TrpB family.</text>
</comment>
<organism>
    <name type="scientific">Vibrio campbellii (strain ATCC BAA-1116)</name>
    <dbReference type="NCBI Taxonomy" id="2902295"/>
    <lineage>
        <taxon>Bacteria</taxon>
        <taxon>Pseudomonadati</taxon>
        <taxon>Pseudomonadota</taxon>
        <taxon>Gammaproteobacteria</taxon>
        <taxon>Vibrionales</taxon>
        <taxon>Vibrionaceae</taxon>
        <taxon>Vibrio</taxon>
    </lineage>
</organism>
<evidence type="ECO:0000255" key="1">
    <source>
        <dbReference type="HAMAP-Rule" id="MF_00133"/>
    </source>
</evidence>
<name>TRPB_VIBC1</name>
<gene>
    <name evidence="1" type="primary">trpB</name>
    <name type="ordered locus">VIBHAR_02762</name>
</gene>
<sequence length="396" mass="42994">MAKLNAYFGEYGGQYVPQILVPALEQLEQAFIDAQEDPEFRSEFMTLLQEYAGRPTALTLTRNLTKGTKTKLYLKREDLLHGGAHKTNQVLGQALLAKRMGKNEIIAETGAGQHGVATALACALLGLKCRVYMGAKDVERQSPNVFRMKLMGAEVIPVHSGSATLKDACNEALRDWSATYEDAHYLLGTAAGPHPFPTIVRDFQRMIGEETKNQILAREGRLPDAVIACVGGGSNAIGMFADFIEEESVRLIGVEPAGKGIDTDQHGAPLKHGKTGIFFGMKAPLMQDPNGQVEESYSVSAGLDFPSVGPQHAHLNAIGRAEYDNVTDDEALEAFQEIARHEGIIPALESSHAVAHALRMARENPEKEQLLVVNLSGRGDKDIFTVHAILEEKGAI</sequence>
<proteinExistence type="inferred from homology"/>
<reference key="1">
    <citation type="submission" date="2007-08" db="EMBL/GenBank/DDBJ databases">
        <authorList>
            <consortium name="The Vibrio harveyi Genome Sequencing Project"/>
            <person name="Bassler B."/>
            <person name="Clifton S.W."/>
            <person name="Fulton L."/>
            <person name="Delehaunty K."/>
            <person name="Fronick C."/>
            <person name="Harrison M."/>
            <person name="Markivic C."/>
            <person name="Fulton R."/>
            <person name="Tin-Wollam A.-M."/>
            <person name="Shah N."/>
            <person name="Pepin K."/>
            <person name="Nash W."/>
            <person name="Thiruvilangam P."/>
            <person name="Bhonagiri V."/>
            <person name="Waters C."/>
            <person name="Tu K.C."/>
            <person name="Irgon J."/>
            <person name="Wilson R.K."/>
        </authorList>
    </citation>
    <scope>NUCLEOTIDE SEQUENCE [LARGE SCALE GENOMIC DNA]</scope>
    <source>
        <strain>ATCC BAA-1116 / BB120</strain>
    </source>
</reference>
<accession>A7MRY0</accession>
<dbReference type="EC" id="4.2.1.20" evidence="1"/>
<dbReference type="EMBL" id="CP000789">
    <property type="protein sequence ID" value="ABU71716.1"/>
    <property type="molecule type" value="Genomic_DNA"/>
</dbReference>
<dbReference type="RefSeq" id="WP_005376781.1">
    <property type="nucleotide sequence ID" value="NC_022269.1"/>
</dbReference>
<dbReference type="SMR" id="A7MRY0"/>
<dbReference type="GeneID" id="75167256"/>
<dbReference type="KEGG" id="vha:VIBHAR_02762"/>
<dbReference type="PATRIC" id="fig|338187.25.peg.3414"/>
<dbReference type="UniPathway" id="UPA00035">
    <property type="reaction ID" value="UER00044"/>
</dbReference>
<dbReference type="Proteomes" id="UP000008152">
    <property type="component" value="Chromosome I"/>
</dbReference>
<dbReference type="GO" id="GO:0005737">
    <property type="term" value="C:cytoplasm"/>
    <property type="evidence" value="ECO:0007669"/>
    <property type="project" value="TreeGrafter"/>
</dbReference>
<dbReference type="GO" id="GO:0004834">
    <property type="term" value="F:tryptophan synthase activity"/>
    <property type="evidence" value="ECO:0007669"/>
    <property type="project" value="UniProtKB-UniRule"/>
</dbReference>
<dbReference type="CDD" id="cd06446">
    <property type="entry name" value="Trp-synth_B"/>
    <property type="match status" value="1"/>
</dbReference>
<dbReference type="FunFam" id="3.40.50.1100:FF:000001">
    <property type="entry name" value="Tryptophan synthase beta chain"/>
    <property type="match status" value="1"/>
</dbReference>
<dbReference type="FunFam" id="3.40.50.1100:FF:000004">
    <property type="entry name" value="Tryptophan synthase beta chain"/>
    <property type="match status" value="1"/>
</dbReference>
<dbReference type="Gene3D" id="3.40.50.1100">
    <property type="match status" value="2"/>
</dbReference>
<dbReference type="HAMAP" id="MF_00133">
    <property type="entry name" value="Trp_synth_beta"/>
    <property type="match status" value="1"/>
</dbReference>
<dbReference type="InterPro" id="IPR006653">
    <property type="entry name" value="Trp_synth_b_CS"/>
</dbReference>
<dbReference type="InterPro" id="IPR006654">
    <property type="entry name" value="Trp_synth_beta"/>
</dbReference>
<dbReference type="InterPro" id="IPR023026">
    <property type="entry name" value="Trp_synth_beta/beta-like"/>
</dbReference>
<dbReference type="InterPro" id="IPR001926">
    <property type="entry name" value="TrpB-like_PALP"/>
</dbReference>
<dbReference type="InterPro" id="IPR036052">
    <property type="entry name" value="TrpB-like_PALP_sf"/>
</dbReference>
<dbReference type="NCBIfam" id="TIGR00263">
    <property type="entry name" value="trpB"/>
    <property type="match status" value="1"/>
</dbReference>
<dbReference type="PANTHER" id="PTHR48077:SF3">
    <property type="entry name" value="TRYPTOPHAN SYNTHASE"/>
    <property type="match status" value="1"/>
</dbReference>
<dbReference type="PANTHER" id="PTHR48077">
    <property type="entry name" value="TRYPTOPHAN SYNTHASE-RELATED"/>
    <property type="match status" value="1"/>
</dbReference>
<dbReference type="Pfam" id="PF00291">
    <property type="entry name" value="PALP"/>
    <property type="match status" value="1"/>
</dbReference>
<dbReference type="PIRSF" id="PIRSF001413">
    <property type="entry name" value="Trp_syn_beta"/>
    <property type="match status" value="1"/>
</dbReference>
<dbReference type="SUPFAM" id="SSF53686">
    <property type="entry name" value="Tryptophan synthase beta subunit-like PLP-dependent enzymes"/>
    <property type="match status" value="1"/>
</dbReference>
<dbReference type="PROSITE" id="PS00168">
    <property type="entry name" value="TRP_SYNTHASE_BETA"/>
    <property type="match status" value="1"/>
</dbReference>
<protein>
    <recommendedName>
        <fullName evidence="1">Tryptophan synthase beta chain</fullName>
        <ecNumber evidence="1">4.2.1.20</ecNumber>
    </recommendedName>
</protein>
<feature type="chain" id="PRO_1000018420" description="Tryptophan synthase beta chain">
    <location>
        <begin position="1"/>
        <end position="396"/>
    </location>
</feature>
<feature type="modified residue" description="N6-(pyridoxal phosphate)lysine" evidence="1">
    <location>
        <position position="86"/>
    </location>
</feature>